<gene>
    <name evidence="1" type="primary">ubiE</name>
    <name type="ordered locus">NMCC_0707</name>
</gene>
<sequence>MGGQKTHFGFSTVNEDEKAGKVAEVFHSVAKNYDIMNDVMSAGLHRVWKHFTINTAHLKKGDKVLDIAGGTGDLSRGWAKRVGKEGEVWLTDINSSMLTVGRDCLLNEGMILPVSLADAEKLPFPDNYFNLVSVAFGLRNMTHKDTALKEMCRVLKPGGTLLVLEFSKIYKPLEGAYDFYSFKLLPVMGKLIAKDAESYQYLAESIRMHPDQETLKQMMLDAGFDSVDYHNMSAGIVALHKGVKF</sequence>
<proteinExistence type="inferred from homology"/>
<name>UBIE_NEIM0</name>
<comment type="function">
    <text evidence="1">Methyltransferase required for the conversion of demethylmenaquinol (DMKH2) to menaquinol (MKH2) and the conversion of 2-polyprenyl-6-methoxy-1,4-benzoquinol (DDMQH2) to 2-polyprenyl-3-methyl-6-methoxy-1,4-benzoquinol (DMQH2).</text>
</comment>
<comment type="catalytic activity">
    <reaction evidence="1">
        <text>a 2-demethylmenaquinol + S-adenosyl-L-methionine = a menaquinol + S-adenosyl-L-homocysteine + H(+)</text>
        <dbReference type="Rhea" id="RHEA:42640"/>
        <dbReference type="Rhea" id="RHEA-COMP:9539"/>
        <dbReference type="Rhea" id="RHEA-COMP:9563"/>
        <dbReference type="ChEBI" id="CHEBI:15378"/>
        <dbReference type="ChEBI" id="CHEBI:18151"/>
        <dbReference type="ChEBI" id="CHEBI:55437"/>
        <dbReference type="ChEBI" id="CHEBI:57856"/>
        <dbReference type="ChEBI" id="CHEBI:59789"/>
        <dbReference type="EC" id="2.1.1.163"/>
    </reaction>
</comment>
<comment type="catalytic activity">
    <reaction evidence="1">
        <text>a 2-methoxy-6-(all-trans-polyprenyl)benzene-1,4-diol + S-adenosyl-L-methionine = a 5-methoxy-2-methyl-3-(all-trans-polyprenyl)benzene-1,4-diol + S-adenosyl-L-homocysteine + H(+)</text>
        <dbReference type="Rhea" id="RHEA:28286"/>
        <dbReference type="Rhea" id="RHEA-COMP:10858"/>
        <dbReference type="Rhea" id="RHEA-COMP:10859"/>
        <dbReference type="ChEBI" id="CHEBI:15378"/>
        <dbReference type="ChEBI" id="CHEBI:57856"/>
        <dbReference type="ChEBI" id="CHEBI:59789"/>
        <dbReference type="ChEBI" id="CHEBI:84166"/>
        <dbReference type="ChEBI" id="CHEBI:84167"/>
        <dbReference type="EC" id="2.1.1.201"/>
    </reaction>
</comment>
<comment type="pathway">
    <text evidence="1">Quinol/quinone metabolism; menaquinone biosynthesis; menaquinol from 1,4-dihydroxy-2-naphthoate: step 2/2.</text>
</comment>
<comment type="pathway">
    <text evidence="1">Cofactor biosynthesis; ubiquinone biosynthesis.</text>
</comment>
<comment type="similarity">
    <text evidence="1">Belongs to the class I-like SAM-binding methyltransferase superfamily. MenG/UbiE family.</text>
</comment>
<keyword id="KW-0474">Menaquinone biosynthesis</keyword>
<keyword id="KW-0489">Methyltransferase</keyword>
<keyword id="KW-0949">S-adenosyl-L-methionine</keyword>
<keyword id="KW-0808">Transferase</keyword>
<keyword id="KW-0831">Ubiquinone biosynthesis</keyword>
<reference key="1">
    <citation type="journal article" date="2008" name="Genomics">
        <title>Characterization of ST-4821 complex, a unique Neisseria meningitidis clone.</title>
        <authorList>
            <person name="Peng J."/>
            <person name="Yang L."/>
            <person name="Yang F."/>
            <person name="Yang J."/>
            <person name="Yan Y."/>
            <person name="Nie H."/>
            <person name="Zhang X."/>
            <person name="Xiong Z."/>
            <person name="Jiang Y."/>
            <person name="Cheng F."/>
            <person name="Xu X."/>
            <person name="Chen S."/>
            <person name="Sun L."/>
            <person name="Li W."/>
            <person name="Shen Y."/>
            <person name="Shao Z."/>
            <person name="Liang X."/>
            <person name="Xu J."/>
            <person name="Jin Q."/>
        </authorList>
    </citation>
    <scope>NUCLEOTIDE SEQUENCE [LARGE SCALE GENOMIC DNA]</scope>
    <source>
        <strain>053442</strain>
    </source>
</reference>
<organism>
    <name type="scientific">Neisseria meningitidis serogroup C (strain 053442)</name>
    <dbReference type="NCBI Taxonomy" id="374833"/>
    <lineage>
        <taxon>Bacteria</taxon>
        <taxon>Pseudomonadati</taxon>
        <taxon>Pseudomonadota</taxon>
        <taxon>Betaproteobacteria</taxon>
        <taxon>Neisseriales</taxon>
        <taxon>Neisseriaceae</taxon>
        <taxon>Neisseria</taxon>
    </lineage>
</organism>
<protein>
    <recommendedName>
        <fullName evidence="1">Ubiquinone/menaquinone biosynthesis C-methyltransferase UbiE</fullName>
        <ecNumber evidence="1">2.1.1.163</ecNumber>
        <ecNumber evidence="1">2.1.1.201</ecNumber>
    </recommendedName>
    <alternativeName>
        <fullName evidence="1">2-methoxy-6-polyprenyl-1,4-benzoquinol methylase</fullName>
    </alternativeName>
    <alternativeName>
        <fullName evidence="1">Demethylmenaquinone methyltransferase</fullName>
    </alternativeName>
</protein>
<evidence type="ECO:0000255" key="1">
    <source>
        <dbReference type="HAMAP-Rule" id="MF_01813"/>
    </source>
</evidence>
<feature type="chain" id="PRO_1000088286" description="Ubiquinone/menaquinone biosynthesis C-methyltransferase UbiE">
    <location>
        <begin position="1"/>
        <end position="245"/>
    </location>
</feature>
<feature type="binding site" evidence="1">
    <location>
        <position position="71"/>
    </location>
    <ligand>
        <name>S-adenosyl-L-methionine</name>
        <dbReference type="ChEBI" id="CHEBI:59789"/>
    </ligand>
</feature>
<feature type="binding site" evidence="1">
    <location>
        <position position="92"/>
    </location>
    <ligand>
        <name>S-adenosyl-L-methionine</name>
        <dbReference type="ChEBI" id="CHEBI:59789"/>
    </ligand>
</feature>
<feature type="binding site" evidence="1">
    <location>
        <begin position="118"/>
        <end position="119"/>
    </location>
    <ligand>
        <name>S-adenosyl-L-methionine</name>
        <dbReference type="ChEBI" id="CHEBI:59789"/>
    </ligand>
</feature>
<dbReference type="EC" id="2.1.1.163" evidence="1"/>
<dbReference type="EC" id="2.1.1.201" evidence="1"/>
<dbReference type="EMBL" id="CP000381">
    <property type="protein sequence ID" value="ABX72900.1"/>
    <property type="molecule type" value="Genomic_DNA"/>
</dbReference>
<dbReference type="RefSeq" id="WP_012221447.1">
    <property type="nucleotide sequence ID" value="NC_010120.1"/>
</dbReference>
<dbReference type="SMR" id="A9M3A0"/>
<dbReference type="KEGG" id="nmn:NMCC_0707"/>
<dbReference type="HOGENOM" id="CLU_037990_0_0_4"/>
<dbReference type="UniPathway" id="UPA00079">
    <property type="reaction ID" value="UER00169"/>
</dbReference>
<dbReference type="UniPathway" id="UPA00232"/>
<dbReference type="Proteomes" id="UP000001177">
    <property type="component" value="Chromosome"/>
</dbReference>
<dbReference type="GO" id="GO:0008425">
    <property type="term" value="F:2-methoxy-6-polyprenyl-1,4-benzoquinol methyltransferase activity"/>
    <property type="evidence" value="ECO:0007669"/>
    <property type="project" value="UniProtKB-UniRule"/>
</dbReference>
<dbReference type="GO" id="GO:0043770">
    <property type="term" value="F:demethylmenaquinone methyltransferase activity"/>
    <property type="evidence" value="ECO:0007669"/>
    <property type="project" value="UniProtKB-UniRule"/>
</dbReference>
<dbReference type="GO" id="GO:0009060">
    <property type="term" value="P:aerobic respiration"/>
    <property type="evidence" value="ECO:0007669"/>
    <property type="project" value="UniProtKB-UniRule"/>
</dbReference>
<dbReference type="GO" id="GO:0009234">
    <property type="term" value="P:menaquinone biosynthetic process"/>
    <property type="evidence" value="ECO:0007669"/>
    <property type="project" value="UniProtKB-UniRule"/>
</dbReference>
<dbReference type="GO" id="GO:0032259">
    <property type="term" value="P:methylation"/>
    <property type="evidence" value="ECO:0007669"/>
    <property type="project" value="UniProtKB-KW"/>
</dbReference>
<dbReference type="CDD" id="cd02440">
    <property type="entry name" value="AdoMet_MTases"/>
    <property type="match status" value="1"/>
</dbReference>
<dbReference type="Gene3D" id="3.40.50.150">
    <property type="entry name" value="Vaccinia Virus protein VP39"/>
    <property type="match status" value="1"/>
</dbReference>
<dbReference type="HAMAP" id="MF_01813">
    <property type="entry name" value="MenG_UbiE_methyltr"/>
    <property type="match status" value="1"/>
</dbReference>
<dbReference type="InterPro" id="IPR029063">
    <property type="entry name" value="SAM-dependent_MTases_sf"/>
</dbReference>
<dbReference type="InterPro" id="IPR004033">
    <property type="entry name" value="UbiE/COQ5_MeTrFase"/>
</dbReference>
<dbReference type="InterPro" id="IPR023576">
    <property type="entry name" value="UbiE/COQ5_MeTrFase_CS"/>
</dbReference>
<dbReference type="NCBIfam" id="TIGR01934">
    <property type="entry name" value="MenG_MenH_UbiE"/>
    <property type="match status" value="1"/>
</dbReference>
<dbReference type="NCBIfam" id="NF001240">
    <property type="entry name" value="PRK00216.1-1"/>
    <property type="match status" value="1"/>
</dbReference>
<dbReference type="NCBIfam" id="NF001244">
    <property type="entry name" value="PRK00216.1-5"/>
    <property type="match status" value="1"/>
</dbReference>
<dbReference type="PANTHER" id="PTHR43591:SF24">
    <property type="entry name" value="2-METHOXY-6-POLYPRENYL-1,4-BENZOQUINOL METHYLASE, MITOCHONDRIAL"/>
    <property type="match status" value="1"/>
</dbReference>
<dbReference type="PANTHER" id="PTHR43591">
    <property type="entry name" value="METHYLTRANSFERASE"/>
    <property type="match status" value="1"/>
</dbReference>
<dbReference type="Pfam" id="PF01209">
    <property type="entry name" value="Ubie_methyltran"/>
    <property type="match status" value="1"/>
</dbReference>
<dbReference type="SUPFAM" id="SSF53335">
    <property type="entry name" value="S-adenosyl-L-methionine-dependent methyltransferases"/>
    <property type="match status" value="1"/>
</dbReference>
<dbReference type="PROSITE" id="PS51608">
    <property type="entry name" value="SAM_MT_UBIE"/>
    <property type="match status" value="1"/>
</dbReference>
<dbReference type="PROSITE" id="PS01183">
    <property type="entry name" value="UBIE_1"/>
    <property type="match status" value="1"/>
</dbReference>
<dbReference type="PROSITE" id="PS01184">
    <property type="entry name" value="UBIE_2"/>
    <property type="match status" value="1"/>
</dbReference>
<accession>A9M3A0</accession>